<gene>
    <name type="primary">Inip</name>
    <name type="synonym">Ssbip1</name>
</gene>
<accession>Q3TXT3</accession>
<accession>B1AX81</accession>
<accession>B1AX82</accession>
<accession>Q3TEN1</accession>
<accession>Q8BTC7</accession>
<dbReference type="EMBL" id="AK004256">
    <property type="protein sequence ID" value="BAC25075.1"/>
    <property type="status" value="ALT_INIT"/>
    <property type="molecule type" value="mRNA"/>
</dbReference>
<dbReference type="EMBL" id="AK159116">
    <property type="protein sequence ID" value="BAE34832.1"/>
    <property type="molecule type" value="mRNA"/>
</dbReference>
<dbReference type="EMBL" id="AK169537">
    <property type="protein sequence ID" value="BAE41217.1"/>
    <property type="status" value="ALT_INIT"/>
    <property type="molecule type" value="mRNA"/>
</dbReference>
<dbReference type="EMBL" id="AL806512">
    <property type="protein sequence ID" value="CAM21914.1"/>
    <property type="molecule type" value="Genomic_DNA"/>
</dbReference>
<dbReference type="EMBL" id="AL806512">
    <property type="protein sequence ID" value="CAM21912.1"/>
    <property type="molecule type" value="Genomic_DNA"/>
</dbReference>
<dbReference type="EMBL" id="AL806512">
    <property type="protein sequence ID" value="CAM21913.1"/>
    <property type="status" value="ALT_SEQ"/>
    <property type="molecule type" value="Genomic_DNA"/>
</dbReference>
<dbReference type="EMBL" id="CH466565">
    <property type="protein sequence ID" value="EDL02202.1"/>
    <property type="molecule type" value="Genomic_DNA"/>
</dbReference>
<dbReference type="EMBL" id="BC116204">
    <property type="protein sequence ID" value="AAI16205.1"/>
    <property type="molecule type" value="mRNA"/>
</dbReference>
<dbReference type="EMBL" id="BC116205">
    <property type="protein sequence ID" value="AAI16206.1"/>
    <property type="molecule type" value="mRNA"/>
</dbReference>
<dbReference type="CCDS" id="CCDS18225.1">
    <molecule id="Q3TXT3-1"/>
</dbReference>
<dbReference type="RefSeq" id="NP_001013595.1">
    <molecule id="Q3TXT3-1"/>
    <property type="nucleotide sequence ID" value="NM_001013577.1"/>
</dbReference>
<dbReference type="RefSeq" id="XP_030109555.1">
    <molecule id="Q3TXT3-2"/>
    <property type="nucleotide sequence ID" value="XM_030253695.2"/>
</dbReference>
<dbReference type="SMR" id="Q3TXT3"/>
<dbReference type="BioGRID" id="211300">
    <property type="interactions" value="2"/>
</dbReference>
<dbReference type="ComplexPortal" id="CPX-613">
    <property type="entry name" value="SOSS1 complex"/>
</dbReference>
<dbReference type="ComplexPortal" id="CPX-615">
    <property type="entry name" value="SOSS2 complex"/>
</dbReference>
<dbReference type="FunCoup" id="Q3TXT3">
    <property type="interactions" value="3046"/>
</dbReference>
<dbReference type="STRING" id="10090.ENSMUSP00000092673"/>
<dbReference type="GlyGen" id="Q3TXT3">
    <property type="glycosylation" value="1 site, 1 N-linked glycan (1 site)"/>
</dbReference>
<dbReference type="PhosphoSitePlus" id="Q3TXT3"/>
<dbReference type="PaxDb" id="10090-ENSMUSP00000092673"/>
<dbReference type="PeptideAtlas" id="Q3TXT3"/>
<dbReference type="ProteomicsDB" id="261610">
    <molecule id="Q3TXT3-1"/>
</dbReference>
<dbReference type="ProteomicsDB" id="261611">
    <molecule id="Q3TXT3-2"/>
</dbReference>
<dbReference type="Pumba" id="Q3TXT3"/>
<dbReference type="Antibodypedia" id="15240">
    <property type="antibodies" value="39 antibodies from 9 providers"/>
</dbReference>
<dbReference type="Ensembl" id="ENSMUST00000095063.11">
    <molecule id="Q3TXT3-1"/>
    <property type="protein sequence ID" value="ENSMUSP00000092673.5"/>
    <property type="gene ID" value="ENSMUSG00000038544.15"/>
</dbReference>
<dbReference type="Ensembl" id="ENSMUST00000107526.8">
    <molecule id="Q3TXT3-2"/>
    <property type="protein sequence ID" value="ENSMUSP00000103150.2"/>
    <property type="gene ID" value="ENSMUSG00000038544.15"/>
</dbReference>
<dbReference type="GeneID" id="66209"/>
<dbReference type="KEGG" id="mmu:66209"/>
<dbReference type="UCSC" id="uc008tac.1">
    <molecule id="Q3TXT3-1"/>
    <property type="organism name" value="mouse"/>
</dbReference>
<dbReference type="AGR" id="MGI:1913459"/>
<dbReference type="CTD" id="58493"/>
<dbReference type="MGI" id="MGI:1913459">
    <property type="gene designation" value="Inip"/>
</dbReference>
<dbReference type="VEuPathDB" id="HostDB:ENSMUSG00000038544"/>
<dbReference type="eggNOG" id="ENOG502S23S">
    <property type="taxonomic scope" value="Eukaryota"/>
</dbReference>
<dbReference type="GeneTree" id="ENSGT00390000006366"/>
<dbReference type="InParanoid" id="Q3TXT3"/>
<dbReference type="OMA" id="QPLFQTY"/>
<dbReference type="OrthoDB" id="10040290at2759"/>
<dbReference type="PhylomeDB" id="Q3TXT3"/>
<dbReference type="TreeFam" id="TF328613"/>
<dbReference type="BioGRID-ORCS" id="66209">
    <property type="hits" value="11 hits in 114 CRISPR screens"/>
</dbReference>
<dbReference type="PRO" id="PR:Q3TXT3"/>
<dbReference type="Proteomes" id="UP000000589">
    <property type="component" value="Chromosome 4"/>
</dbReference>
<dbReference type="RNAct" id="Q3TXT3">
    <property type="molecule type" value="protein"/>
</dbReference>
<dbReference type="Bgee" id="ENSMUSG00000038544">
    <property type="expression patterns" value="Expressed in animal zygote and 235 other cell types or tissues"/>
</dbReference>
<dbReference type="ExpressionAtlas" id="Q3TXT3">
    <property type="expression patterns" value="baseline and differential"/>
</dbReference>
<dbReference type="GO" id="GO:0005654">
    <property type="term" value="C:nucleoplasm"/>
    <property type="evidence" value="ECO:0007669"/>
    <property type="project" value="Ensembl"/>
</dbReference>
<dbReference type="GO" id="GO:0005634">
    <property type="term" value="C:nucleus"/>
    <property type="evidence" value="ECO:0000250"/>
    <property type="project" value="UniProtKB"/>
</dbReference>
<dbReference type="GO" id="GO:0035861">
    <property type="term" value="C:site of double-strand break"/>
    <property type="evidence" value="ECO:0007669"/>
    <property type="project" value="Ensembl"/>
</dbReference>
<dbReference type="GO" id="GO:0070876">
    <property type="term" value="C:SOSS complex"/>
    <property type="evidence" value="ECO:0000250"/>
    <property type="project" value="UniProtKB"/>
</dbReference>
<dbReference type="GO" id="GO:0006974">
    <property type="term" value="P:DNA damage response"/>
    <property type="evidence" value="ECO:0000250"/>
    <property type="project" value="UniProtKB"/>
</dbReference>
<dbReference type="GO" id="GO:0006281">
    <property type="term" value="P:DNA repair"/>
    <property type="evidence" value="ECO:0000250"/>
    <property type="project" value="UniProtKB"/>
</dbReference>
<dbReference type="GO" id="GO:0000724">
    <property type="term" value="P:double-strand break repair via homologous recombination"/>
    <property type="evidence" value="ECO:0000266"/>
    <property type="project" value="ComplexPortal"/>
</dbReference>
<dbReference type="GO" id="GO:0044818">
    <property type="term" value="P:mitotic G2/M transition checkpoint"/>
    <property type="evidence" value="ECO:0000266"/>
    <property type="project" value="ComplexPortal"/>
</dbReference>
<dbReference type="GO" id="GO:0010212">
    <property type="term" value="P:response to ionizing radiation"/>
    <property type="evidence" value="ECO:0000250"/>
    <property type="project" value="UniProtKB"/>
</dbReference>
<dbReference type="InterPro" id="IPR031821">
    <property type="entry name" value="SOSSC"/>
</dbReference>
<dbReference type="PANTHER" id="PTHR31526">
    <property type="entry name" value="SOSS COMPLEX SUBUNIT C"/>
    <property type="match status" value="1"/>
</dbReference>
<dbReference type="PANTHER" id="PTHR31526:SF2">
    <property type="entry name" value="SOSS COMPLEX SUBUNIT C"/>
    <property type="match status" value="1"/>
</dbReference>
<dbReference type="Pfam" id="PF15925">
    <property type="entry name" value="SOSSC"/>
    <property type="match status" value="1"/>
</dbReference>
<keyword id="KW-0007">Acetylation</keyword>
<keyword id="KW-0025">Alternative splicing</keyword>
<keyword id="KW-0227">DNA damage</keyword>
<keyword id="KW-0234">DNA repair</keyword>
<keyword id="KW-0539">Nucleus</keyword>
<keyword id="KW-0597">Phosphoprotein</keyword>
<keyword id="KW-1185">Reference proteome</keyword>
<feature type="initiator methionine" description="Removed" evidence="2">
    <location>
        <position position="1"/>
    </location>
</feature>
<feature type="chain" id="PRO_0000279420" description="SOSS complex subunit C">
    <location>
        <begin position="2"/>
        <end position="104"/>
    </location>
</feature>
<feature type="modified residue" description="N-acetylalanine" evidence="2">
    <location>
        <position position="2"/>
    </location>
</feature>
<feature type="modified residue" description="Phosphoserine" evidence="2">
    <location>
        <position position="50"/>
    </location>
</feature>
<feature type="splice variant" id="VSP_023425" description="In isoform 2." evidence="3">
    <location>
        <begin position="1"/>
        <end position="30"/>
    </location>
</feature>
<name>SOSSC_MOUSE</name>
<reference key="1">
    <citation type="journal article" date="2005" name="Science">
        <title>The transcriptional landscape of the mammalian genome.</title>
        <authorList>
            <person name="Carninci P."/>
            <person name="Kasukawa T."/>
            <person name="Katayama S."/>
            <person name="Gough J."/>
            <person name="Frith M.C."/>
            <person name="Maeda N."/>
            <person name="Oyama R."/>
            <person name="Ravasi T."/>
            <person name="Lenhard B."/>
            <person name="Wells C."/>
            <person name="Kodzius R."/>
            <person name="Shimokawa K."/>
            <person name="Bajic V.B."/>
            <person name="Brenner S.E."/>
            <person name="Batalov S."/>
            <person name="Forrest A.R."/>
            <person name="Zavolan M."/>
            <person name="Davis M.J."/>
            <person name="Wilming L.G."/>
            <person name="Aidinis V."/>
            <person name="Allen J.E."/>
            <person name="Ambesi-Impiombato A."/>
            <person name="Apweiler R."/>
            <person name="Aturaliya R.N."/>
            <person name="Bailey T.L."/>
            <person name="Bansal M."/>
            <person name="Baxter L."/>
            <person name="Beisel K.W."/>
            <person name="Bersano T."/>
            <person name="Bono H."/>
            <person name="Chalk A.M."/>
            <person name="Chiu K.P."/>
            <person name="Choudhary V."/>
            <person name="Christoffels A."/>
            <person name="Clutterbuck D.R."/>
            <person name="Crowe M.L."/>
            <person name="Dalla E."/>
            <person name="Dalrymple B.P."/>
            <person name="de Bono B."/>
            <person name="Della Gatta G."/>
            <person name="di Bernardo D."/>
            <person name="Down T."/>
            <person name="Engstrom P."/>
            <person name="Fagiolini M."/>
            <person name="Faulkner G."/>
            <person name="Fletcher C.F."/>
            <person name="Fukushima T."/>
            <person name="Furuno M."/>
            <person name="Futaki S."/>
            <person name="Gariboldi M."/>
            <person name="Georgii-Hemming P."/>
            <person name="Gingeras T.R."/>
            <person name="Gojobori T."/>
            <person name="Green R.E."/>
            <person name="Gustincich S."/>
            <person name="Harbers M."/>
            <person name="Hayashi Y."/>
            <person name="Hensch T.K."/>
            <person name="Hirokawa N."/>
            <person name="Hill D."/>
            <person name="Huminiecki L."/>
            <person name="Iacono M."/>
            <person name="Ikeo K."/>
            <person name="Iwama A."/>
            <person name="Ishikawa T."/>
            <person name="Jakt M."/>
            <person name="Kanapin A."/>
            <person name="Katoh M."/>
            <person name="Kawasawa Y."/>
            <person name="Kelso J."/>
            <person name="Kitamura H."/>
            <person name="Kitano H."/>
            <person name="Kollias G."/>
            <person name="Krishnan S.P."/>
            <person name="Kruger A."/>
            <person name="Kummerfeld S.K."/>
            <person name="Kurochkin I.V."/>
            <person name="Lareau L.F."/>
            <person name="Lazarevic D."/>
            <person name="Lipovich L."/>
            <person name="Liu J."/>
            <person name="Liuni S."/>
            <person name="McWilliam S."/>
            <person name="Madan Babu M."/>
            <person name="Madera M."/>
            <person name="Marchionni L."/>
            <person name="Matsuda H."/>
            <person name="Matsuzawa S."/>
            <person name="Miki H."/>
            <person name="Mignone F."/>
            <person name="Miyake S."/>
            <person name="Morris K."/>
            <person name="Mottagui-Tabar S."/>
            <person name="Mulder N."/>
            <person name="Nakano N."/>
            <person name="Nakauchi H."/>
            <person name="Ng P."/>
            <person name="Nilsson R."/>
            <person name="Nishiguchi S."/>
            <person name="Nishikawa S."/>
            <person name="Nori F."/>
            <person name="Ohara O."/>
            <person name="Okazaki Y."/>
            <person name="Orlando V."/>
            <person name="Pang K.C."/>
            <person name="Pavan W.J."/>
            <person name="Pavesi G."/>
            <person name="Pesole G."/>
            <person name="Petrovsky N."/>
            <person name="Piazza S."/>
            <person name="Reed J."/>
            <person name="Reid J.F."/>
            <person name="Ring B.Z."/>
            <person name="Ringwald M."/>
            <person name="Rost B."/>
            <person name="Ruan Y."/>
            <person name="Salzberg S.L."/>
            <person name="Sandelin A."/>
            <person name="Schneider C."/>
            <person name="Schoenbach C."/>
            <person name="Sekiguchi K."/>
            <person name="Semple C.A."/>
            <person name="Seno S."/>
            <person name="Sessa L."/>
            <person name="Sheng Y."/>
            <person name="Shibata Y."/>
            <person name="Shimada H."/>
            <person name="Shimada K."/>
            <person name="Silva D."/>
            <person name="Sinclair B."/>
            <person name="Sperling S."/>
            <person name="Stupka E."/>
            <person name="Sugiura K."/>
            <person name="Sultana R."/>
            <person name="Takenaka Y."/>
            <person name="Taki K."/>
            <person name="Tammoja K."/>
            <person name="Tan S.L."/>
            <person name="Tang S."/>
            <person name="Taylor M.S."/>
            <person name="Tegner J."/>
            <person name="Teichmann S.A."/>
            <person name="Ueda H.R."/>
            <person name="van Nimwegen E."/>
            <person name="Verardo R."/>
            <person name="Wei C.L."/>
            <person name="Yagi K."/>
            <person name="Yamanishi H."/>
            <person name="Zabarovsky E."/>
            <person name="Zhu S."/>
            <person name="Zimmer A."/>
            <person name="Hide W."/>
            <person name="Bult C."/>
            <person name="Grimmond S.M."/>
            <person name="Teasdale R.D."/>
            <person name="Liu E.T."/>
            <person name="Brusic V."/>
            <person name="Quackenbush J."/>
            <person name="Wahlestedt C."/>
            <person name="Mattick J.S."/>
            <person name="Hume D.A."/>
            <person name="Kai C."/>
            <person name="Sasaki D."/>
            <person name="Tomaru Y."/>
            <person name="Fukuda S."/>
            <person name="Kanamori-Katayama M."/>
            <person name="Suzuki M."/>
            <person name="Aoki J."/>
            <person name="Arakawa T."/>
            <person name="Iida J."/>
            <person name="Imamura K."/>
            <person name="Itoh M."/>
            <person name="Kato T."/>
            <person name="Kawaji H."/>
            <person name="Kawagashira N."/>
            <person name="Kawashima T."/>
            <person name="Kojima M."/>
            <person name="Kondo S."/>
            <person name="Konno H."/>
            <person name="Nakano K."/>
            <person name="Ninomiya N."/>
            <person name="Nishio T."/>
            <person name="Okada M."/>
            <person name="Plessy C."/>
            <person name="Shibata K."/>
            <person name="Shiraki T."/>
            <person name="Suzuki S."/>
            <person name="Tagami M."/>
            <person name="Waki K."/>
            <person name="Watahiki A."/>
            <person name="Okamura-Oho Y."/>
            <person name="Suzuki H."/>
            <person name="Kawai J."/>
            <person name="Hayashizaki Y."/>
        </authorList>
    </citation>
    <scope>NUCLEOTIDE SEQUENCE [LARGE SCALE MRNA] (ISOFORMS 1 AND 2)</scope>
    <source>
        <strain>C57BL/6J</strain>
        <tissue>Embryo</tissue>
        <tissue>Thymus</tissue>
    </source>
</reference>
<reference key="2">
    <citation type="journal article" date="2009" name="PLoS Biol.">
        <title>Lineage-specific biology revealed by a finished genome assembly of the mouse.</title>
        <authorList>
            <person name="Church D.M."/>
            <person name="Goodstadt L."/>
            <person name="Hillier L.W."/>
            <person name="Zody M.C."/>
            <person name="Goldstein S."/>
            <person name="She X."/>
            <person name="Bult C.J."/>
            <person name="Agarwala R."/>
            <person name="Cherry J.L."/>
            <person name="DiCuccio M."/>
            <person name="Hlavina W."/>
            <person name="Kapustin Y."/>
            <person name="Meric P."/>
            <person name="Maglott D."/>
            <person name="Birtle Z."/>
            <person name="Marques A.C."/>
            <person name="Graves T."/>
            <person name="Zhou S."/>
            <person name="Teague B."/>
            <person name="Potamousis K."/>
            <person name="Churas C."/>
            <person name="Place M."/>
            <person name="Herschleb J."/>
            <person name="Runnheim R."/>
            <person name="Forrest D."/>
            <person name="Amos-Landgraf J."/>
            <person name="Schwartz D.C."/>
            <person name="Cheng Z."/>
            <person name="Lindblad-Toh K."/>
            <person name="Eichler E.E."/>
            <person name="Ponting C.P."/>
        </authorList>
    </citation>
    <scope>NUCLEOTIDE SEQUENCE [LARGE SCALE GENOMIC DNA]</scope>
    <source>
        <strain>C57BL/6J</strain>
    </source>
</reference>
<reference key="3">
    <citation type="submission" date="2005-09" db="EMBL/GenBank/DDBJ databases">
        <authorList>
            <person name="Mural R.J."/>
            <person name="Adams M.D."/>
            <person name="Myers E.W."/>
            <person name="Smith H.O."/>
            <person name="Venter J.C."/>
        </authorList>
    </citation>
    <scope>NUCLEOTIDE SEQUENCE [LARGE SCALE GENOMIC DNA]</scope>
</reference>
<reference key="4">
    <citation type="journal article" date="2004" name="Genome Res.">
        <title>The status, quality, and expansion of the NIH full-length cDNA project: the Mammalian Gene Collection (MGC).</title>
        <authorList>
            <consortium name="The MGC Project Team"/>
        </authorList>
    </citation>
    <scope>NUCLEOTIDE SEQUENCE [LARGE SCALE MRNA] (ISOFORM 1)</scope>
</reference>
<organism>
    <name type="scientific">Mus musculus</name>
    <name type="common">Mouse</name>
    <dbReference type="NCBI Taxonomy" id="10090"/>
    <lineage>
        <taxon>Eukaryota</taxon>
        <taxon>Metazoa</taxon>
        <taxon>Chordata</taxon>
        <taxon>Craniata</taxon>
        <taxon>Vertebrata</taxon>
        <taxon>Euteleostomi</taxon>
        <taxon>Mammalia</taxon>
        <taxon>Eutheria</taxon>
        <taxon>Euarchontoglires</taxon>
        <taxon>Glires</taxon>
        <taxon>Rodentia</taxon>
        <taxon>Myomorpha</taxon>
        <taxon>Muroidea</taxon>
        <taxon>Muridae</taxon>
        <taxon>Murinae</taxon>
        <taxon>Mus</taxon>
        <taxon>Mus</taxon>
    </lineage>
</organism>
<comment type="function">
    <text evidence="1">Component of the SOSS complex, a multiprotein complex that functions downstream of the MRN complex to promote DNA repair and G2/M checkpoint. The SOSS complex associates with single-stranded DNA at DNA lesions and influences diverse endpoints in the cellular DNA damage response including cell-cycle checkpoint activation, recombinational repair and maintenance of genomic stability. Required for efficient homologous recombination-dependent repair of double-strand breaks (DSBs) and ATM-dependent signaling pathways (By similarity).</text>
</comment>
<comment type="subunit">
    <text evidence="1">Component of the SOSS complex, composed of SOSS-B (SOSS-B1/NABP2 or SOSS-B2/NABP1), SOSS-A/INTS3 and SOSS-C/INIP. SOSS complexes containing SOSS-B1/NABP2 are more abundant than complexes containing SOSS-B2/NABP1. Interacts with INTS3; the interaction is direct (By similarity).</text>
</comment>
<comment type="subcellular location">
    <subcellularLocation>
        <location evidence="1">Nucleus</location>
    </subcellularLocation>
    <text evidence="1">Localizes to nuclear foci following DNA damage.</text>
</comment>
<comment type="alternative products">
    <event type="alternative splicing"/>
    <isoform>
        <id>Q3TXT3-1</id>
        <name>1</name>
        <sequence type="displayed"/>
    </isoform>
    <isoform>
        <id>Q3TXT3-2</id>
        <name>2</name>
        <sequence type="described" ref="VSP_023425"/>
    </isoform>
</comment>
<comment type="similarity">
    <text evidence="4">Belongs to the SOSS-C family.</text>
</comment>
<comment type="sequence caution" evidence="4">
    <conflict type="erroneous initiation">
        <sequence resource="EMBL-CDS" id="BAC25075"/>
    </conflict>
    <text>Extended N-terminus.</text>
</comment>
<comment type="sequence caution" evidence="4">
    <conflict type="erroneous initiation">
        <sequence resource="EMBL-CDS" id="BAE41217"/>
    </conflict>
    <text>Extended N-terminus.</text>
</comment>
<comment type="sequence caution" evidence="4">
    <conflict type="erroneous gene model prediction">
        <sequence resource="EMBL-CDS" id="CAM21913"/>
    </conflict>
</comment>
<evidence type="ECO:0000250" key="1"/>
<evidence type="ECO:0000250" key="2">
    <source>
        <dbReference type="UniProtKB" id="Q9NRY2"/>
    </source>
</evidence>
<evidence type="ECO:0000303" key="3">
    <source>
    </source>
</evidence>
<evidence type="ECO:0000305" key="4"/>
<proteinExistence type="inferred from homology"/>
<sequence length="104" mass="11411">MAANPSGQGFQNKNRVAILAELDKEKRKLLMQNQSSTSHPGASISLSRPSLTKDFRDHAEQQHIAAQQKAALQHAHAHSSGYFITQDSAFGNLILPVLPRLDPE</sequence>
<protein>
    <recommendedName>
        <fullName>SOSS complex subunit C</fullName>
    </recommendedName>
    <alternativeName>
        <fullName>INTS3- and NABP-interacting protein</fullName>
    </alternativeName>
    <alternativeName>
        <fullName>Sensor of single-strand DNA complex subunit C</fullName>
    </alternativeName>
    <alternativeName>
        <fullName>Sensor of ssDNA subunit C</fullName>
        <shortName>SOSS-C</shortName>
    </alternativeName>
    <alternativeName>
        <fullName>Single-stranded DNA-binding protein-interacting protein 1</fullName>
        <shortName>SSB-interacting protein 1</shortName>
    </alternativeName>
</protein>